<dbReference type="EC" id="3.5.1.18" evidence="1"/>
<dbReference type="EMBL" id="CP000302">
    <property type="protein sequence ID" value="ABE55098.1"/>
    <property type="molecule type" value="Genomic_DNA"/>
</dbReference>
<dbReference type="RefSeq" id="WP_011496255.1">
    <property type="nucleotide sequence ID" value="NC_007954.1"/>
</dbReference>
<dbReference type="SMR" id="Q12N78"/>
<dbReference type="STRING" id="318161.Sden_1814"/>
<dbReference type="KEGG" id="sdn:Sden_1814"/>
<dbReference type="eggNOG" id="COG0624">
    <property type="taxonomic scope" value="Bacteria"/>
</dbReference>
<dbReference type="HOGENOM" id="CLU_021802_4_0_6"/>
<dbReference type="OrthoDB" id="9809784at2"/>
<dbReference type="UniPathway" id="UPA00034">
    <property type="reaction ID" value="UER00021"/>
</dbReference>
<dbReference type="Proteomes" id="UP000001982">
    <property type="component" value="Chromosome"/>
</dbReference>
<dbReference type="GO" id="GO:0008777">
    <property type="term" value="F:acetylornithine deacetylase activity"/>
    <property type="evidence" value="ECO:0007669"/>
    <property type="project" value="TreeGrafter"/>
</dbReference>
<dbReference type="GO" id="GO:0050897">
    <property type="term" value="F:cobalt ion binding"/>
    <property type="evidence" value="ECO:0007669"/>
    <property type="project" value="UniProtKB-UniRule"/>
</dbReference>
<dbReference type="GO" id="GO:0009014">
    <property type="term" value="F:succinyl-diaminopimelate desuccinylase activity"/>
    <property type="evidence" value="ECO:0007669"/>
    <property type="project" value="UniProtKB-UniRule"/>
</dbReference>
<dbReference type="GO" id="GO:0008270">
    <property type="term" value="F:zinc ion binding"/>
    <property type="evidence" value="ECO:0007669"/>
    <property type="project" value="UniProtKB-UniRule"/>
</dbReference>
<dbReference type="GO" id="GO:0019877">
    <property type="term" value="P:diaminopimelate biosynthetic process"/>
    <property type="evidence" value="ECO:0007669"/>
    <property type="project" value="UniProtKB-UniRule"/>
</dbReference>
<dbReference type="GO" id="GO:0006526">
    <property type="term" value="P:L-arginine biosynthetic process"/>
    <property type="evidence" value="ECO:0007669"/>
    <property type="project" value="TreeGrafter"/>
</dbReference>
<dbReference type="GO" id="GO:0009089">
    <property type="term" value="P:lysine biosynthetic process via diaminopimelate"/>
    <property type="evidence" value="ECO:0007669"/>
    <property type="project" value="UniProtKB-UniRule"/>
</dbReference>
<dbReference type="CDD" id="cd03891">
    <property type="entry name" value="M20_DapE_proteobac"/>
    <property type="match status" value="1"/>
</dbReference>
<dbReference type="FunFam" id="3.30.70.360:FF:000011">
    <property type="entry name" value="Succinyl-diaminopimelate desuccinylase"/>
    <property type="match status" value="1"/>
</dbReference>
<dbReference type="FunFam" id="3.40.630.10:FF:000005">
    <property type="entry name" value="Succinyl-diaminopimelate desuccinylase"/>
    <property type="match status" value="1"/>
</dbReference>
<dbReference type="Gene3D" id="1.10.150.900">
    <property type="match status" value="1"/>
</dbReference>
<dbReference type="Gene3D" id="3.30.70.360">
    <property type="match status" value="1"/>
</dbReference>
<dbReference type="Gene3D" id="3.40.630.10">
    <property type="entry name" value="Zn peptidases"/>
    <property type="match status" value="1"/>
</dbReference>
<dbReference type="HAMAP" id="MF_01690">
    <property type="entry name" value="DapE"/>
    <property type="match status" value="1"/>
</dbReference>
<dbReference type="InterPro" id="IPR036264">
    <property type="entry name" value="Bact_exopeptidase_dim_dom"/>
</dbReference>
<dbReference type="InterPro" id="IPR005941">
    <property type="entry name" value="DapE_proteobac"/>
</dbReference>
<dbReference type="InterPro" id="IPR002933">
    <property type="entry name" value="Peptidase_M20"/>
</dbReference>
<dbReference type="InterPro" id="IPR011650">
    <property type="entry name" value="Peptidase_M20_dimer"/>
</dbReference>
<dbReference type="InterPro" id="IPR050072">
    <property type="entry name" value="Peptidase_M20A"/>
</dbReference>
<dbReference type="NCBIfam" id="TIGR01246">
    <property type="entry name" value="dapE_proteo"/>
    <property type="match status" value="1"/>
</dbReference>
<dbReference type="NCBIfam" id="NF009557">
    <property type="entry name" value="PRK13009.1"/>
    <property type="match status" value="1"/>
</dbReference>
<dbReference type="PANTHER" id="PTHR43808">
    <property type="entry name" value="ACETYLORNITHINE DEACETYLASE"/>
    <property type="match status" value="1"/>
</dbReference>
<dbReference type="PANTHER" id="PTHR43808:SF31">
    <property type="entry name" value="N-ACETYL-L-CITRULLINE DEACETYLASE"/>
    <property type="match status" value="1"/>
</dbReference>
<dbReference type="Pfam" id="PF07687">
    <property type="entry name" value="M20_dimer"/>
    <property type="match status" value="1"/>
</dbReference>
<dbReference type="Pfam" id="PF01546">
    <property type="entry name" value="Peptidase_M20"/>
    <property type="match status" value="1"/>
</dbReference>
<dbReference type="SUPFAM" id="SSF55031">
    <property type="entry name" value="Bacterial exopeptidase dimerisation domain"/>
    <property type="match status" value="1"/>
</dbReference>
<dbReference type="SUPFAM" id="SSF53187">
    <property type="entry name" value="Zn-dependent exopeptidases"/>
    <property type="match status" value="1"/>
</dbReference>
<accession>Q12N78</accession>
<keyword id="KW-0028">Amino-acid biosynthesis</keyword>
<keyword id="KW-0170">Cobalt</keyword>
<keyword id="KW-0220">Diaminopimelate biosynthesis</keyword>
<keyword id="KW-0378">Hydrolase</keyword>
<keyword id="KW-0457">Lysine biosynthesis</keyword>
<keyword id="KW-0479">Metal-binding</keyword>
<keyword id="KW-1185">Reference proteome</keyword>
<keyword id="KW-0862">Zinc</keyword>
<evidence type="ECO:0000255" key="1">
    <source>
        <dbReference type="HAMAP-Rule" id="MF_01690"/>
    </source>
</evidence>
<protein>
    <recommendedName>
        <fullName evidence="1">Succinyl-diaminopimelate desuccinylase</fullName>
        <shortName evidence="1">SDAP desuccinylase</shortName>
        <ecNumber evidence="1">3.5.1.18</ecNumber>
    </recommendedName>
    <alternativeName>
        <fullName evidence="1">N-succinyl-LL-2,6-diaminoheptanedioate amidohydrolase</fullName>
    </alternativeName>
</protein>
<organism>
    <name type="scientific">Shewanella denitrificans (strain OS217 / ATCC BAA-1090 / DSM 15013)</name>
    <dbReference type="NCBI Taxonomy" id="318161"/>
    <lineage>
        <taxon>Bacteria</taxon>
        <taxon>Pseudomonadati</taxon>
        <taxon>Pseudomonadota</taxon>
        <taxon>Gammaproteobacteria</taxon>
        <taxon>Alteromonadales</taxon>
        <taxon>Shewanellaceae</taxon>
        <taxon>Shewanella</taxon>
    </lineage>
</organism>
<comment type="function">
    <text evidence="1">Catalyzes the hydrolysis of N-succinyl-L,L-diaminopimelic acid (SDAP), forming succinate and LL-2,6-diaminopimelate (DAP), an intermediate involved in the bacterial biosynthesis of lysine and meso-diaminopimelic acid, an essential component of bacterial cell walls.</text>
</comment>
<comment type="catalytic activity">
    <reaction evidence="1">
        <text>N-succinyl-(2S,6S)-2,6-diaminopimelate + H2O = (2S,6S)-2,6-diaminopimelate + succinate</text>
        <dbReference type="Rhea" id="RHEA:22608"/>
        <dbReference type="ChEBI" id="CHEBI:15377"/>
        <dbReference type="ChEBI" id="CHEBI:30031"/>
        <dbReference type="ChEBI" id="CHEBI:57609"/>
        <dbReference type="ChEBI" id="CHEBI:58087"/>
        <dbReference type="EC" id="3.5.1.18"/>
    </reaction>
</comment>
<comment type="cofactor">
    <cofactor evidence="1">
        <name>Zn(2+)</name>
        <dbReference type="ChEBI" id="CHEBI:29105"/>
    </cofactor>
    <cofactor evidence="1">
        <name>Co(2+)</name>
        <dbReference type="ChEBI" id="CHEBI:48828"/>
    </cofactor>
    <text evidence="1">Binds 2 Zn(2+) or Co(2+) ions per subunit.</text>
</comment>
<comment type="pathway">
    <text evidence="1">Amino-acid biosynthesis; L-lysine biosynthesis via DAP pathway; LL-2,6-diaminopimelate from (S)-tetrahydrodipicolinate (succinylase route): step 3/3.</text>
</comment>
<comment type="subunit">
    <text evidence="1">Homodimer.</text>
</comment>
<comment type="similarity">
    <text evidence="1">Belongs to the peptidase M20A family. DapE subfamily.</text>
</comment>
<gene>
    <name evidence="1" type="primary">dapE</name>
    <name type="ordered locus">Sden_1814</name>
</gene>
<name>DAPE_SHEDO</name>
<reference key="1">
    <citation type="submission" date="2006-03" db="EMBL/GenBank/DDBJ databases">
        <title>Complete sequence of Shewanella denitrificans OS217.</title>
        <authorList>
            <consortium name="US DOE Joint Genome Institute"/>
            <person name="Copeland A."/>
            <person name="Lucas S."/>
            <person name="Lapidus A."/>
            <person name="Barry K."/>
            <person name="Detter J.C."/>
            <person name="Glavina del Rio T."/>
            <person name="Hammon N."/>
            <person name="Israni S."/>
            <person name="Dalin E."/>
            <person name="Tice H."/>
            <person name="Pitluck S."/>
            <person name="Brettin T."/>
            <person name="Bruce D."/>
            <person name="Han C."/>
            <person name="Tapia R."/>
            <person name="Gilna P."/>
            <person name="Kiss H."/>
            <person name="Schmutz J."/>
            <person name="Larimer F."/>
            <person name="Land M."/>
            <person name="Hauser L."/>
            <person name="Kyrpides N."/>
            <person name="Lykidis A."/>
            <person name="Richardson P."/>
        </authorList>
    </citation>
    <scope>NUCLEOTIDE SEQUENCE [LARGE SCALE GENOMIC DNA]</scope>
    <source>
        <strain>OS217 / ATCC BAA-1090 / DSM 15013</strain>
    </source>
</reference>
<sequence length="376" mass="40534">MSTDVTQLAMALIARPSVTPLDEGCQTLMGKHLSAAGFTLEPMVFEDTTNLWARRGTQAPVFCFAGHTDVVPIGDLARWHTPPFEPTIIDGYLHGRGAADMKGSLAAMLVATERFVAKHPHHNGSIAYLITSDEEGPFINGTTRVIDTLEARNEKITWALVGEPSSTYKLGDVVKNGRRGSLTGNLTVNGVQGHVAYPHLADNPIHKAAPALTELAQMHWDNGNEFFPPTSFQIANINGGTGASNVIPGNLEVMFNFRYSTEVTADELIARVLGILDAHGLDYDISWVFNGLPFLTGDGPLLEATKSAIREVTGYDTDPQTTGGTSDGRFIAPTGAQVIELGPVNATIHKVNECVKIADLEQLALCYEKLLEKLLC</sequence>
<proteinExistence type="inferred from homology"/>
<feature type="chain" id="PRO_0000375730" description="Succinyl-diaminopimelate desuccinylase">
    <location>
        <begin position="1"/>
        <end position="376"/>
    </location>
</feature>
<feature type="active site" evidence="1">
    <location>
        <position position="69"/>
    </location>
</feature>
<feature type="active site" description="Proton acceptor" evidence="1">
    <location>
        <position position="134"/>
    </location>
</feature>
<feature type="binding site" evidence="1">
    <location>
        <position position="67"/>
    </location>
    <ligand>
        <name>Zn(2+)</name>
        <dbReference type="ChEBI" id="CHEBI:29105"/>
        <label>1</label>
    </ligand>
</feature>
<feature type="binding site" evidence="1">
    <location>
        <position position="100"/>
    </location>
    <ligand>
        <name>Zn(2+)</name>
        <dbReference type="ChEBI" id="CHEBI:29105"/>
        <label>1</label>
    </ligand>
</feature>
<feature type="binding site" evidence="1">
    <location>
        <position position="100"/>
    </location>
    <ligand>
        <name>Zn(2+)</name>
        <dbReference type="ChEBI" id="CHEBI:29105"/>
        <label>2</label>
    </ligand>
</feature>
<feature type="binding site" evidence="1">
    <location>
        <position position="135"/>
    </location>
    <ligand>
        <name>Zn(2+)</name>
        <dbReference type="ChEBI" id="CHEBI:29105"/>
        <label>2</label>
    </ligand>
</feature>
<feature type="binding site" evidence="1">
    <location>
        <position position="163"/>
    </location>
    <ligand>
        <name>Zn(2+)</name>
        <dbReference type="ChEBI" id="CHEBI:29105"/>
        <label>1</label>
    </ligand>
</feature>
<feature type="binding site" evidence="1">
    <location>
        <position position="349"/>
    </location>
    <ligand>
        <name>Zn(2+)</name>
        <dbReference type="ChEBI" id="CHEBI:29105"/>
        <label>2</label>
    </ligand>
</feature>